<dbReference type="EMBL" id="CM000070">
    <property type="protein sequence ID" value="EAL27369.1"/>
    <property type="molecule type" value="Genomic_DNA"/>
</dbReference>
<dbReference type="RefSeq" id="XP_001358231.1">
    <property type="nucleotide sequence ID" value="XM_001358194.3"/>
</dbReference>
<dbReference type="SMR" id="Q29AI1"/>
<dbReference type="FunCoup" id="Q29AI1">
    <property type="interactions" value="2335"/>
</dbReference>
<dbReference type="STRING" id="46245.Q29AI1"/>
<dbReference type="EnsemblMetazoa" id="FBtr0284014">
    <property type="protein sequence ID" value="FBpp0282452"/>
    <property type="gene ID" value="FBgn0080229"/>
</dbReference>
<dbReference type="GeneID" id="4801070"/>
<dbReference type="KEGG" id="dpo:4801070"/>
<dbReference type="CTD" id="41801"/>
<dbReference type="eggNOG" id="KOG0794">
    <property type="taxonomic scope" value="Eukaryota"/>
</dbReference>
<dbReference type="HOGENOM" id="CLU_034754_1_1_1"/>
<dbReference type="InParanoid" id="Q29AI1"/>
<dbReference type="OMA" id="CLLHPPH"/>
<dbReference type="PhylomeDB" id="Q29AI1"/>
<dbReference type="Proteomes" id="UP000001819">
    <property type="component" value="Chromosome 2"/>
</dbReference>
<dbReference type="Bgee" id="FBgn0080229">
    <property type="expression patterns" value="Expressed in female reproductive system and 2 other cell types or tissues"/>
</dbReference>
<dbReference type="GO" id="GO:0016592">
    <property type="term" value="C:mediator complex"/>
    <property type="evidence" value="ECO:0000250"/>
    <property type="project" value="UniProtKB"/>
</dbReference>
<dbReference type="GO" id="GO:0016538">
    <property type="term" value="F:cyclin-dependent protein serine/threonine kinase regulator activity"/>
    <property type="evidence" value="ECO:0007669"/>
    <property type="project" value="InterPro"/>
</dbReference>
<dbReference type="GO" id="GO:0003712">
    <property type="term" value="F:transcription coregulator activity"/>
    <property type="evidence" value="ECO:0000250"/>
    <property type="project" value="UniProtKB"/>
</dbReference>
<dbReference type="GO" id="GO:0006357">
    <property type="term" value="P:regulation of transcription by RNA polymerase II"/>
    <property type="evidence" value="ECO:0000250"/>
    <property type="project" value="UniProtKB"/>
</dbReference>
<dbReference type="CDD" id="cd20513">
    <property type="entry name" value="CYCLIN_CCNC_rpt1"/>
    <property type="match status" value="1"/>
</dbReference>
<dbReference type="CDD" id="cd20514">
    <property type="entry name" value="CYCLIN_CCNC_rpt2"/>
    <property type="match status" value="1"/>
</dbReference>
<dbReference type="FunFam" id="1.10.472.10:FF:000015">
    <property type="entry name" value="Putative cyclin-c"/>
    <property type="match status" value="1"/>
</dbReference>
<dbReference type="FunFam" id="1.10.472.10:FF:000017">
    <property type="entry name" value="Putative cyclin-c"/>
    <property type="match status" value="1"/>
</dbReference>
<dbReference type="Gene3D" id="1.10.472.10">
    <property type="entry name" value="Cyclin-like"/>
    <property type="match status" value="2"/>
</dbReference>
<dbReference type="InterPro" id="IPR013763">
    <property type="entry name" value="Cyclin-like_dom"/>
</dbReference>
<dbReference type="InterPro" id="IPR036915">
    <property type="entry name" value="Cyclin-like_sf"/>
</dbReference>
<dbReference type="InterPro" id="IPR043198">
    <property type="entry name" value="Cyclin/Ssn8"/>
</dbReference>
<dbReference type="InterPro" id="IPR031658">
    <property type="entry name" value="Cyclin_C_2"/>
</dbReference>
<dbReference type="InterPro" id="IPR006671">
    <property type="entry name" value="Cyclin_N"/>
</dbReference>
<dbReference type="PANTHER" id="PTHR10026">
    <property type="entry name" value="CYCLIN"/>
    <property type="match status" value="1"/>
</dbReference>
<dbReference type="Pfam" id="PF16899">
    <property type="entry name" value="Cyclin_C_2"/>
    <property type="match status" value="1"/>
</dbReference>
<dbReference type="Pfam" id="PF00134">
    <property type="entry name" value="Cyclin_N"/>
    <property type="match status" value="1"/>
</dbReference>
<dbReference type="PIRSF" id="PIRSF028758">
    <property type="entry name" value="Cyclin, C/H/G types"/>
    <property type="match status" value="1"/>
</dbReference>
<dbReference type="SMART" id="SM00385">
    <property type="entry name" value="CYCLIN"/>
    <property type="match status" value="2"/>
</dbReference>
<dbReference type="SUPFAM" id="SSF47954">
    <property type="entry name" value="Cyclin-like"/>
    <property type="match status" value="2"/>
</dbReference>
<proteinExistence type="inferred from homology"/>
<feature type="chain" id="PRO_0000314262" description="Cyclin-C">
    <location>
        <begin position="1"/>
        <end position="267"/>
    </location>
</feature>
<feature type="domain" description="Cyclin N-terminal">
    <location>
        <begin position="48"/>
        <end position="151"/>
    </location>
</feature>
<protein>
    <recommendedName>
        <fullName>Cyclin-C</fullName>
    </recommendedName>
</protein>
<accession>Q29AI1</accession>
<sequence length="267" mass="31404">MAGNFWQSSHSQQWILDKQDLLRERQHDLLSLNEDEYQKVFIFFANVIQVLGEQLKLRQQVIATATVYFKRFYARNSLKNIDPLLLAPTCILLASKVEEFGVISNSRLISICQSAIKTKFSYAYTQEFPYRTNHILECEFYLLENLDCCLIVYQPYRPLLQLVQDMGQEDQLLTLSWRIVNDSLRTDVCLLYPPYQIAIACLQIACVILQKDSTKQWFAELNVDLDKVQEIVRAIVNLYEMWKDWKEKDEIQMLLSKIPKPKPPPQR</sequence>
<organism>
    <name type="scientific">Drosophila pseudoobscura pseudoobscura</name>
    <name type="common">Fruit fly</name>
    <dbReference type="NCBI Taxonomy" id="46245"/>
    <lineage>
        <taxon>Eukaryota</taxon>
        <taxon>Metazoa</taxon>
        <taxon>Ecdysozoa</taxon>
        <taxon>Arthropoda</taxon>
        <taxon>Hexapoda</taxon>
        <taxon>Insecta</taxon>
        <taxon>Pterygota</taxon>
        <taxon>Neoptera</taxon>
        <taxon>Endopterygota</taxon>
        <taxon>Diptera</taxon>
        <taxon>Brachycera</taxon>
        <taxon>Muscomorpha</taxon>
        <taxon>Ephydroidea</taxon>
        <taxon>Drosophilidae</taxon>
        <taxon>Drosophila</taxon>
        <taxon>Sophophora</taxon>
    </lineage>
</organism>
<comment type="function">
    <text evidence="1">Component of the Mediator complex, a coactivator involved in regulated gene transcription of nearly all RNA polymerase II-dependent genes. Mediator functions as a bridge to convey information from gene-specific regulatory proteins to the basal RNA polymerase II transcription machinery. Mediator is recruited to promoters by direct interactions with regulatory proteins and serves as a scaffold for the assembly of a functional preinitiation complex with RNA polymerase II and the general transcription factors. Binds to and activates cyclin-dependent kinase Cdk8 that phosphorylates the CTD (C-terminal domain) of the large subunit of RNA polymerase II (RNAp II), which may inhibit the formation of a transcription initiation complex (By similarity).</text>
</comment>
<comment type="subunit">
    <text evidence="1">Component of the Cdk8 module of the Mediator complex.</text>
</comment>
<comment type="subcellular location">
    <subcellularLocation>
        <location evidence="1">Nucleus</location>
    </subcellularLocation>
</comment>
<comment type="similarity">
    <text evidence="2">Belongs to the cyclin family. Cyclin C subfamily.</text>
</comment>
<evidence type="ECO:0000250" key="1"/>
<evidence type="ECO:0000305" key="2"/>
<name>CCNC_DROPS</name>
<keyword id="KW-0010">Activator</keyword>
<keyword id="KW-0195">Cyclin</keyword>
<keyword id="KW-0539">Nucleus</keyword>
<keyword id="KW-1185">Reference proteome</keyword>
<keyword id="KW-0678">Repressor</keyword>
<keyword id="KW-0804">Transcription</keyword>
<keyword id="KW-0805">Transcription regulation</keyword>
<reference key="1">
    <citation type="journal article" date="2005" name="Genome Res.">
        <title>Comparative genome sequencing of Drosophila pseudoobscura: chromosomal, gene, and cis-element evolution.</title>
        <authorList>
            <person name="Richards S."/>
            <person name="Liu Y."/>
            <person name="Bettencourt B.R."/>
            <person name="Hradecky P."/>
            <person name="Letovsky S."/>
            <person name="Nielsen R."/>
            <person name="Thornton K."/>
            <person name="Hubisz M.J."/>
            <person name="Chen R."/>
            <person name="Meisel R.P."/>
            <person name="Couronne O."/>
            <person name="Hua S."/>
            <person name="Smith M.A."/>
            <person name="Zhang P."/>
            <person name="Liu J."/>
            <person name="Bussemaker H.J."/>
            <person name="van Batenburg M.F."/>
            <person name="Howells S.L."/>
            <person name="Scherer S.E."/>
            <person name="Sodergren E."/>
            <person name="Matthews B.B."/>
            <person name="Crosby M.A."/>
            <person name="Schroeder A.J."/>
            <person name="Ortiz-Barrientos D."/>
            <person name="Rives C.M."/>
            <person name="Metzker M.L."/>
            <person name="Muzny D.M."/>
            <person name="Scott G."/>
            <person name="Steffen D."/>
            <person name="Wheeler D.A."/>
            <person name="Worley K.C."/>
            <person name="Havlak P."/>
            <person name="Durbin K.J."/>
            <person name="Egan A."/>
            <person name="Gill R."/>
            <person name="Hume J."/>
            <person name="Morgan M.B."/>
            <person name="Miner G."/>
            <person name="Hamilton C."/>
            <person name="Huang Y."/>
            <person name="Waldron L."/>
            <person name="Verduzco D."/>
            <person name="Clerc-Blankenburg K.P."/>
            <person name="Dubchak I."/>
            <person name="Noor M.A.F."/>
            <person name="Anderson W."/>
            <person name="White K.P."/>
            <person name="Clark A.G."/>
            <person name="Schaeffer S.W."/>
            <person name="Gelbart W.M."/>
            <person name="Weinstock G.M."/>
            <person name="Gibbs R.A."/>
        </authorList>
    </citation>
    <scope>NUCLEOTIDE SEQUENCE [LARGE SCALE GENOMIC DNA]</scope>
    <source>
        <strain>MV2-25 / Tucson 14011-0121.94</strain>
    </source>
</reference>
<gene>
    <name type="primary">CycC</name>
    <name type="ORF">GA20234</name>
</gene>